<dbReference type="EC" id="1.3.7.7" evidence="1"/>
<dbReference type="EMBL" id="CP000494">
    <property type="protein sequence ID" value="ABQ38327.1"/>
    <property type="molecule type" value="Genomic_DNA"/>
</dbReference>
<dbReference type="RefSeq" id="WP_012046268.1">
    <property type="nucleotide sequence ID" value="NC_009485.1"/>
</dbReference>
<dbReference type="SMR" id="A5EQ83"/>
<dbReference type="STRING" id="288000.BBta_6417"/>
<dbReference type="KEGG" id="bbt:BBta_6417"/>
<dbReference type="eggNOG" id="COG2710">
    <property type="taxonomic scope" value="Bacteria"/>
</dbReference>
<dbReference type="HOGENOM" id="CLU_037170_0_0_5"/>
<dbReference type="OrthoDB" id="5714774at2"/>
<dbReference type="UniPathway" id="UPA00671"/>
<dbReference type="Proteomes" id="UP000000246">
    <property type="component" value="Chromosome"/>
</dbReference>
<dbReference type="GO" id="GO:0051539">
    <property type="term" value="F:4 iron, 4 sulfur cluster binding"/>
    <property type="evidence" value="ECO:0007669"/>
    <property type="project" value="UniProtKB-UniRule"/>
</dbReference>
<dbReference type="GO" id="GO:0005524">
    <property type="term" value="F:ATP binding"/>
    <property type="evidence" value="ECO:0007669"/>
    <property type="project" value="UniProtKB-UniRule"/>
</dbReference>
<dbReference type="GO" id="GO:0046872">
    <property type="term" value="F:metal ion binding"/>
    <property type="evidence" value="ECO:0007669"/>
    <property type="project" value="UniProtKB-KW"/>
</dbReference>
<dbReference type="GO" id="GO:0016730">
    <property type="term" value="F:oxidoreductase activity, acting on iron-sulfur proteins as donors"/>
    <property type="evidence" value="ECO:0007669"/>
    <property type="project" value="InterPro"/>
</dbReference>
<dbReference type="GO" id="GO:0016636">
    <property type="term" value="F:oxidoreductase activity, acting on the CH-CH group of donors, iron-sulfur protein as acceptor"/>
    <property type="evidence" value="ECO:0007669"/>
    <property type="project" value="UniProtKB-UniRule"/>
</dbReference>
<dbReference type="GO" id="GO:0036070">
    <property type="term" value="P:light-independent bacteriochlorophyll biosynthetic process"/>
    <property type="evidence" value="ECO:0007669"/>
    <property type="project" value="UniProtKB-UniRule"/>
</dbReference>
<dbReference type="GO" id="GO:0019685">
    <property type="term" value="P:photosynthesis, dark reaction"/>
    <property type="evidence" value="ECO:0007669"/>
    <property type="project" value="InterPro"/>
</dbReference>
<dbReference type="Gene3D" id="3.40.50.1980">
    <property type="entry name" value="Nitrogenase molybdenum iron protein domain"/>
    <property type="match status" value="3"/>
</dbReference>
<dbReference type="HAMAP" id="MF_00352">
    <property type="entry name" value="ChlN_BchN"/>
    <property type="match status" value="1"/>
</dbReference>
<dbReference type="InterPro" id="IPR050293">
    <property type="entry name" value="LIPOR_BchN/ChlN"/>
</dbReference>
<dbReference type="InterPro" id="IPR000510">
    <property type="entry name" value="Nase/OxRdtase_comp1"/>
</dbReference>
<dbReference type="InterPro" id="IPR005970">
    <property type="entry name" value="Protochl_reductN"/>
</dbReference>
<dbReference type="NCBIfam" id="TIGR01279">
    <property type="entry name" value="DPOR_bchN"/>
    <property type="match status" value="1"/>
</dbReference>
<dbReference type="NCBIfam" id="NF002768">
    <property type="entry name" value="PRK02842.1"/>
    <property type="match status" value="1"/>
</dbReference>
<dbReference type="PANTHER" id="PTHR39429">
    <property type="entry name" value="LIGHT-INDEPENDENT PROTOCHLOROPHYLLIDE REDUCTASE SUBUNIT N"/>
    <property type="match status" value="1"/>
</dbReference>
<dbReference type="PANTHER" id="PTHR39429:SF3">
    <property type="entry name" value="LIGHT-INDEPENDENT PROTOCHLOROPHYLLIDE REDUCTASE SUBUNIT N"/>
    <property type="match status" value="1"/>
</dbReference>
<dbReference type="Pfam" id="PF00148">
    <property type="entry name" value="Oxidored_nitro"/>
    <property type="match status" value="1"/>
</dbReference>
<dbReference type="PIRSF" id="PIRSF000162">
    <property type="entry name" value="P_chlorophyll_rd"/>
    <property type="match status" value="1"/>
</dbReference>
<dbReference type="SUPFAM" id="SSF53807">
    <property type="entry name" value="Helical backbone' metal receptor"/>
    <property type="match status" value="1"/>
</dbReference>
<reference key="1">
    <citation type="journal article" date="2007" name="Science">
        <title>Legumes symbioses: absence of nod genes in photosynthetic bradyrhizobia.</title>
        <authorList>
            <person name="Giraud E."/>
            <person name="Moulin L."/>
            <person name="Vallenet D."/>
            <person name="Barbe V."/>
            <person name="Cytryn E."/>
            <person name="Avarre J.-C."/>
            <person name="Jaubert M."/>
            <person name="Simon D."/>
            <person name="Cartieaux F."/>
            <person name="Prin Y."/>
            <person name="Bena G."/>
            <person name="Hannibal L."/>
            <person name="Fardoux J."/>
            <person name="Kojadinovic M."/>
            <person name="Vuillet L."/>
            <person name="Lajus A."/>
            <person name="Cruveiller S."/>
            <person name="Rouy Z."/>
            <person name="Mangenot S."/>
            <person name="Segurens B."/>
            <person name="Dossat C."/>
            <person name="Franck W.L."/>
            <person name="Chang W.-S."/>
            <person name="Saunders E."/>
            <person name="Bruce D."/>
            <person name="Richardson P."/>
            <person name="Normand P."/>
            <person name="Dreyfus B."/>
            <person name="Pignol D."/>
            <person name="Stacey G."/>
            <person name="Emerich D."/>
            <person name="Vermeglio A."/>
            <person name="Medigue C."/>
            <person name="Sadowsky M."/>
        </authorList>
    </citation>
    <scope>NUCLEOTIDE SEQUENCE [LARGE SCALE GENOMIC DNA]</scope>
    <source>
        <strain>BTAi1 / ATCC BAA-1182</strain>
    </source>
</reference>
<evidence type="ECO:0000255" key="1">
    <source>
        <dbReference type="HAMAP-Rule" id="MF_00352"/>
    </source>
</evidence>
<accession>A5EQ83</accession>
<proteinExistence type="inferred from homology"/>
<feature type="chain" id="PRO_0000324000" description="Light-independent protochlorophyllide reductase subunit N">
    <location>
        <begin position="1"/>
        <end position="428"/>
    </location>
</feature>
<feature type="binding site" evidence="1">
    <location>
        <position position="30"/>
    </location>
    <ligand>
        <name>[4Fe-4S] cluster</name>
        <dbReference type="ChEBI" id="CHEBI:49883"/>
        <note>ligand shared with heterodimeric partner</note>
    </ligand>
</feature>
<feature type="binding site" evidence="1">
    <location>
        <position position="55"/>
    </location>
    <ligand>
        <name>[4Fe-4S] cluster</name>
        <dbReference type="ChEBI" id="CHEBI:49883"/>
        <note>ligand shared with heterodimeric partner</note>
    </ligand>
</feature>
<feature type="binding site" evidence="1">
    <location>
        <position position="116"/>
    </location>
    <ligand>
        <name>[4Fe-4S] cluster</name>
        <dbReference type="ChEBI" id="CHEBI:49883"/>
        <note>ligand shared with heterodimeric partner</note>
    </ligand>
</feature>
<sequence>MNAHAQACAVTSAASPDGVLRERGQREVFCGLTGIVWLHRKIQDAFFLVVGSRTCAHLIQSAAGVMIFAEPRFATAIMEERDLAGLVDANDELDRIVTQLLARRPEIKLLFLVGSCPSEVIKLDLSRAALRLSQRFSPGVRVLNYSGSGIETTFTQGEDACLASLVPVLPAADRSARPSLLVVGALADVVEDQFKRTFAALGIDQVAFLPPRRSSELPAIGPETRVLLAQPFLGDTARALEERGCRRIAAPFPLGGEGTALWLAAAADAFGVSHAHVERTIAPLKARAERALARYRAQLAGKRVFLFPDSQIEIPLARFLSREIGMELVEVGTPYLHRDHLASELALLPGGTQLSEGQDVERQLDRCRDARPDLVVCGLGLANPLEAEGLTTKWSIELIFTPIQGFEQAGDLAELFARPLLRQTRLAV</sequence>
<name>BCHN_BRASB</name>
<gene>
    <name evidence="1" type="primary">bchN</name>
    <name type="ordered locus">BBta_6417</name>
</gene>
<keyword id="KW-0004">4Fe-4S</keyword>
<keyword id="KW-0067">ATP-binding</keyword>
<keyword id="KW-0077">Bacteriochlorophyll biosynthesis</keyword>
<keyword id="KW-0149">Chlorophyll biosynthesis</keyword>
<keyword id="KW-0408">Iron</keyword>
<keyword id="KW-0411">Iron-sulfur</keyword>
<keyword id="KW-0479">Metal-binding</keyword>
<keyword id="KW-0547">Nucleotide-binding</keyword>
<keyword id="KW-0560">Oxidoreductase</keyword>
<keyword id="KW-0602">Photosynthesis</keyword>
<keyword id="KW-1185">Reference proteome</keyword>
<protein>
    <recommendedName>
        <fullName evidence="1">Light-independent protochlorophyllide reductase subunit N</fullName>
        <shortName evidence="1">DPOR subunit N</shortName>
        <shortName evidence="1">LI-POR subunit N</shortName>
        <ecNumber evidence="1">1.3.7.7</ecNumber>
    </recommendedName>
</protein>
<comment type="function">
    <text evidence="1">Component of the dark-operative protochlorophyllide reductase (DPOR) that uses Mg-ATP and reduced ferredoxin to reduce ring D of protochlorophyllide (Pchlide) to form chlorophyllide a (Chlide). This reaction is light-independent. The NB-protein (BchN-BchB) is the catalytic component of the complex.</text>
</comment>
<comment type="catalytic activity">
    <reaction evidence="1">
        <text>chlorophyllide a + oxidized 2[4Fe-4S]-[ferredoxin] + 2 ADP + 2 phosphate = protochlorophyllide a + reduced 2[4Fe-4S]-[ferredoxin] + 2 ATP + 2 H2O</text>
        <dbReference type="Rhea" id="RHEA:28202"/>
        <dbReference type="Rhea" id="RHEA-COMP:10002"/>
        <dbReference type="Rhea" id="RHEA-COMP:10004"/>
        <dbReference type="ChEBI" id="CHEBI:15377"/>
        <dbReference type="ChEBI" id="CHEBI:30616"/>
        <dbReference type="ChEBI" id="CHEBI:33722"/>
        <dbReference type="ChEBI" id="CHEBI:33723"/>
        <dbReference type="ChEBI" id="CHEBI:43474"/>
        <dbReference type="ChEBI" id="CHEBI:83348"/>
        <dbReference type="ChEBI" id="CHEBI:83350"/>
        <dbReference type="ChEBI" id="CHEBI:456216"/>
        <dbReference type="EC" id="1.3.7.7"/>
    </reaction>
</comment>
<comment type="cofactor">
    <cofactor evidence="1">
        <name>[4Fe-4S] cluster</name>
        <dbReference type="ChEBI" id="CHEBI:49883"/>
    </cofactor>
    <text evidence="1">Binds 1 [4Fe-4S] cluster per heterodimer. The cluster is bound at the heterodimer interface by residues from both subunits.</text>
</comment>
<comment type="pathway">
    <text evidence="1">Porphyrin-containing compound metabolism; bacteriochlorophyll biosynthesis (light-independent).</text>
</comment>
<comment type="subunit">
    <text evidence="1">Protochlorophyllide reductase is composed of three subunits; BchL, BchN and BchB. Forms a heterotetramer of two BchB and two BchN subunits.</text>
</comment>
<comment type="similarity">
    <text evidence="1">Belongs to the BchN/ChlN family.</text>
</comment>
<organism>
    <name type="scientific">Bradyrhizobium sp. (strain BTAi1 / ATCC BAA-1182)</name>
    <dbReference type="NCBI Taxonomy" id="288000"/>
    <lineage>
        <taxon>Bacteria</taxon>
        <taxon>Pseudomonadati</taxon>
        <taxon>Pseudomonadota</taxon>
        <taxon>Alphaproteobacteria</taxon>
        <taxon>Hyphomicrobiales</taxon>
        <taxon>Nitrobacteraceae</taxon>
        <taxon>Bradyrhizobium</taxon>
    </lineage>
</organism>